<organism>
    <name type="scientific">Salmonella enteritidis PT4 (strain P125109)</name>
    <dbReference type="NCBI Taxonomy" id="550537"/>
    <lineage>
        <taxon>Bacteria</taxon>
        <taxon>Pseudomonadati</taxon>
        <taxon>Pseudomonadota</taxon>
        <taxon>Gammaproteobacteria</taxon>
        <taxon>Enterobacterales</taxon>
        <taxon>Enterobacteriaceae</taxon>
        <taxon>Salmonella</taxon>
    </lineage>
</organism>
<comment type="function">
    <text evidence="1">Transfers the gamma-phosphate of ATP to the 4'-position of a tetraacyldisaccharide 1-phosphate intermediate (termed DS-1-P) to form tetraacyldisaccharide 1,4'-bis-phosphate (lipid IVA).</text>
</comment>
<comment type="catalytic activity">
    <reaction evidence="1">
        <text>a lipid A disaccharide + ATP = a lipid IVA + ADP + H(+)</text>
        <dbReference type="Rhea" id="RHEA:67840"/>
        <dbReference type="ChEBI" id="CHEBI:15378"/>
        <dbReference type="ChEBI" id="CHEBI:30616"/>
        <dbReference type="ChEBI" id="CHEBI:176343"/>
        <dbReference type="ChEBI" id="CHEBI:176425"/>
        <dbReference type="ChEBI" id="CHEBI:456216"/>
        <dbReference type="EC" id="2.7.1.130"/>
    </reaction>
</comment>
<comment type="pathway">
    <text evidence="1">Glycolipid biosynthesis; lipid IV(A) biosynthesis; lipid IV(A) from (3R)-3-hydroxytetradecanoyl-[acyl-carrier-protein] and UDP-N-acetyl-alpha-D-glucosamine: step 6/6.</text>
</comment>
<comment type="similarity">
    <text evidence="1">Belongs to the LpxK family.</text>
</comment>
<keyword id="KW-0067">ATP-binding</keyword>
<keyword id="KW-0418">Kinase</keyword>
<keyword id="KW-0441">Lipid A biosynthesis</keyword>
<keyword id="KW-0444">Lipid biosynthesis</keyword>
<keyword id="KW-0443">Lipid metabolism</keyword>
<keyword id="KW-0547">Nucleotide-binding</keyword>
<keyword id="KW-0808">Transferase</keyword>
<reference key="1">
    <citation type="journal article" date="2008" name="Genome Res.">
        <title>Comparative genome analysis of Salmonella enteritidis PT4 and Salmonella gallinarum 287/91 provides insights into evolutionary and host adaptation pathways.</title>
        <authorList>
            <person name="Thomson N.R."/>
            <person name="Clayton D.J."/>
            <person name="Windhorst D."/>
            <person name="Vernikos G."/>
            <person name="Davidson S."/>
            <person name="Churcher C."/>
            <person name="Quail M.A."/>
            <person name="Stevens M."/>
            <person name="Jones M.A."/>
            <person name="Watson M."/>
            <person name="Barron A."/>
            <person name="Layton A."/>
            <person name="Pickard D."/>
            <person name="Kingsley R.A."/>
            <person name="Bignell A."/>
            <person name="Clark L."/>
            <person name="Harris B."/>
            <person name="Ormond D."/>
            <person name="Abdellah Z."/>
            <person name="Brooks K."/>
            <person name="Cherevach I."/>
            <person name="Chillingworth T."/>
            <person name="Woodward J."/>
            <person name="Norberczak H."/>
            <person name="Lord A."/>
            <person name="Arrowsmith C."/>
            <person name="Jagels K."/>
            <person name="Moule S."/>
            <person name="Mungall K."/>
            <person name="Saunders M."/>
            <person name="Whitehead S."/>
            <person name="Chabalgoity J.A."/>
            <person name="Maskell D."/>
            <person name="Humphreys T."/>
            <person name="Roberts M."/>
            <person name="Barrow P.A."/>
            <person name="Dougan G."/>
            <person name="Parkhill J."/>
        </authorList>
    </citation>
    <scope>NUCLEOTIDE SEQUENCE [LARGE SCALE GENOMIC DNA]</scope>
    <source>
        <strain>P125109</strain>
    </source>
</reference>
<name>LPXK_SALEP</name>
<dbReference type="EC" id="2.7.1.130" evidence="1"/>
<dbReference type="EMBL" id="AM933172">
    <property type="protein sequence ID" value="CAR32472.1"/>
    <property type="molecule type" value="Genomic_DNA"/>
</dbReference>
<dbReference type="RefSeq" id="WP_000561676.1">
    <property type="nucleotide sequence ID" value="NC_011294.1"/>
</dbReference>
<dbReference type="SMR" id="B5QZB9"/>
<dbReference type="KEGG" id="set:SEN0889"/>
<dbReference type="HOGENOM" id="CLU_038816_2_0_6"/>
<dbReference type="UniPathway" id="UPA00359">
    <property type="reaction ID" value="UER00482"/>
</dbReference>
<dbReference type="Proteomes" id="UP000000613">
    <property type="component" value="Chromosome"/>
</dbReference>
<dbReference type="GO" id="GO:0005886">
    <property type="term" value="C:plasma membrane"/>
    <property type="evidence" value="ECO:0007669"/>
    <property type="project" value="TreeGrafter"/>
</dbReference>
<dbReference type="GO" id="GO:0005524">
    <property type="term" value="F:ATP binding"/>
    <property type="evidence" value="ECO:0007669"/>
    <property type="project" value="UniProtKB-UniRule"/>
</dbReference>
<dbReference type="GO" id="GO:0009029">
    <property type="term" value="F:tetraacyldisaccharide 4'-kinase activity"/>
    <property type="evidence" value="ECO:0007669"/>
    <property type="project" value="UniProtKB-UniRule"/>
</dbReference>
<dbReference type="GO" id="GO:0009245">
    <property type="term" value="P:lipid A biosynthetic process"/>
    <property type="evidence" value="ECO:0007669"/>
    <property type="project" value="UniProtKB-UniRule"/>
</dbReference>
<dbReference type="GO" id="GO:0009244">
    <property type="term" value="P:lipopolysaccharide core region biosynthetic process"/>
    <property type="evidence" value="ECO:0007669"/>
    <property type="project" value="TreeGrafter"/>
</dbReference>
<dbReference type="HAMAP" id="MF_00409">
    <property type="entry name" value="LpxK"/>
    <property type="match status" value="1"/>
</dbReference>
<dbReference type="InterPro" id="IPR003758">
    <property type="entry name" value="LpxK"/>
</dbReference>
<dbReference type="InterPro" id="IPR027417">
    <property type="entry name" value="P-loop_NTPase"/>
</dbReference>
<dbReference type="NCBIfam" id="TIGR00682">
    <property type="entry name" value="lpxK"/>
    <property type="match status" value="1"/>
</dbReference>
<dbReference type="PANTHER" id="PTHR42724">
    <property type="entry name" value="TETRAACYLDISACCHARIDE 4'-KINASE"/>
    <property type="match status" value="1"/>
</dbReference>
<dbReference type="PANTHER" id="PTHR42724:SF1">
    <property type="entry name" value="TETRAACYLDISACCHARIDE 4'-KINASE, MITOCHONDRIAL-RELATED"/>
    <property type="match status" value="1"/>
</dbReference>
<dbReference type="Pfam" id="PF02606">
    <property type="entry name" value="LpxK"/>
    <property type="match status" value="1"/>
</dbReference>
<dbReference type="SUPFAM" id="SSF52540">
    <property type="entry name" value="P-loop containing nucleoside triphosphate hydrolases"/>
    <property type="match status" value="1"/>
</dbReference>
<gene>
    <name evidence="1" type="primary">lpxK</name>
    <name type="ordered locus">SEN0889</name>
</gene>
<sequence>MIARIWSGESPLWRLLLPLSWLYGLVSGAIRLSYKLGFKRAWRAPVPVVVVGNLTAGGNGKTPVVIWLVEKLQQRGVRVGVVSRGYGGKAAAYPLLLTPETTTAEAGDEPVLIYQRTGAPVAVAPERAAAVKAILAAHNLQIIITDDGLQHYRLARDIEIVVIDGVRRFGNGWWLPAGPMRERASRLKTVDAAIVNGGVARAGEIPMQLAPGLAVNLRTGARCDVAQLSNIVAMAGIGHPPRFFATLEACGAHPQKCVPLADHQTLAPADVQALVGEGQTLVMTEKDAVKCRAFAEDNWWFLPVDARLSGEQPDKLLEHITSLVR</sequence>
<feature type="chain" id="PRO_1000123738" description="Tetraacyldisaccharide 4'-kinase">
    <location>
        <begin position="1"/>
        <end position="325"/>
    </location>
</feature>
<feature type="binding site" evidence="1">
    <location>
        <begin position="55"/>
        <end position="62"/>
    </location>
    <ligand>
        <name>ATP</name>
        <dbReference type="ChEBI" id="CHEBI:30616"/>
    </ligand>
</feature>
<protein>
    <recommendedName>
        <fullName evidence="1">Tetraacyldisaccharide 4'-kinase</fullName>
        <ecNumber evidence="1">2.7.1.130</ecNumber>
    </recommendedName>
    <alternativeName>
        <fullName evidence="1">Lipid A 4'-kinase</fullName>
    </alternativeName>
</protein>
<accession>B5QZB9</accession>
<evidence type="ECO:0000255" key="1">
    <source>
        <dbReference type="HAMAP-Rule" id="MF_00409"/>
    </source>
</evidence>
<proteinExistence type="inferred from homology"/>